<accession>B7UPW3</accession>
<name>CH60_ECO27</name>
<sequence length="548" mass="57329">MAAKDVKFGNDARVKMLRGVNVLADAVKVTLGPKGRNVVLDKSFGAPTITKDGVSVAREIELEDKFENMGAQMVKEVASKANDAAGDGTTTATVLAQAIITEGLKAVAAGMNPMDLKRGIDKAVTAAVEELKALSVPCSDSKAIAQVGTISANSDETVGKLIAEAMDKVGKEGVITVEDGTGLQDELDVVEGMQFDRGYLSPYFINKPETGAVELESPFILLADKKISNIREMLPVLEAVAKAGKPLLIIAEDVEGEALATLVVNTMRGIVKVAAVKAPGFGDRRKAMLQDIATLTGGTVISEEIGMELEKATLEDLGQAKRVVINKDTTTIIDGVGEEAAIQGRVAQIRQQIEEATSDYDREKLQERVAKLAGGVAVIKVGAATEVEMKEKKARVEDALHATRAAVEEGVVAGGGVALIRVASKLADLRGQNEDQNVGIKVALRAMEAPLRQIVLNCGEEPSVVANTVKGGDGNYGYNAATEEYGNMIDMGILDPTKVTRSALQYAASVAGLMITTECMVTDLPKNDAADLGAAGGMGGMGGMGGMM</sequence>
<keyword id="KW-0067">ATP-binding</keyword>
<keyword id="KW-0143">Chaperone</keyword>
<keyword id="KW-0963">Cytoplasm</keyword>
<keyword id="KW-0413">Isomerase</keyword>
<keyword id="KW-0547">Nucleotide-binding</keyword>
<keyword id="KW-1185">Reference proteome</keyword>
<feature type="chain" id="PRO_1000147031" description="Chaperonin GroEL">
    <location>
        <begin position="1"/>
        <end position="548"/>
    </location>
</feature>
<feature type="binding site" evidence="1">
    <location>
        <begin position="30"/>
        <end position="33"/>
    </location>
    <ligand>
        <name>ATP</name>
        <dbReference type="ChEBI" id="CHEBI:30616"/>
    </ligand>
</feature>
<feature type="binding site" evidence="1">
    <location>
        <position position="51"/>
    </location>
    <ligand>
        <name>ATP</name>
        <dbReference type="ChEBI" id="CHEBI:30616"/>
    </ligand>
</feature>
<feature type="binding site" evidence="1">
    <location>
        <begin position="87"/>
        <end position="91"/>
    </location>
    <ligand>
        <name>ATP</name>
        <dbReference type="ChEBI" id="CHEBI:30616"/>
    </ligand>
</feature>
<feature type="binding site" evidence="1">
    <location>
        <position position="415"/>
    </location>
    <ligand>
        <name>ATP</name>
        <dbReference type="ChEBI" id="CHEBI:30616"/>
    </ligand>
</feature>
<feature type="binding site" evidence="1">
    <location>
        <begin position="479"/>
        <end position="481"/>
    </location>
    <ligand>
        <name>ATP</name>
        <dbReference type="ChEBI" id="CHEBI:30616"/>
    </ligand>
</feature>
<feature type="binding site" evidence="1">
    <location>
        <position position="495"/>
    </location>
    <ligand>
        <name>ATP</name>
        <dbReference type="ChEBI" id="CHEBI:30616"/>
    </ligand>
</feature>
<comment type="function">
    <text evidence="1">Together with its co-chaperonin GroES, plays an essential role in assisting protein folding. The GroEL-GroES system forms a nano-cage that allows encapsulation of the non-native substrate proteins and provides a physical environment optimized to promote and accelerate protein folding.</text>
</comment>
<comment type="catalytic activity">
    <reaction evidence="1">
        <text>ATP + H2O + a folded polypeptide = ADP + phosphate + an unfolded polypeptide.</text>
        <dbReference type="EC" id="5.6.1.7"/>
    </reaction>
</comment>
<comment type="subunit">
    <text evidence="1">Forms a cylinder of 14 subunits composed of two heptameric rings stacked back-to-back. Interacts with the co-chaperonin GroES.</text>
</comment>
<comment type="subcellular location">
    <subcellularLocation>
        <location evidence="1">Cytoplasm</location>
    </subcellularLocation>
</comment>
<comment type="similarity">
    <text evidence="1">Belongs to the chaperonin (HSP60) family.</text>
</comment>
<dbReference type="EC" id="5.6.1.7" evidence="1"/>
<dbReference type="EMBL" id="FM180568">
    <property type="protein sequence ID" value="CAS12017.1"/>
    <property type="molecule type" value="Genomic_DNA"/>
</dbReference>
<dbReference type="RefSeq" id="WP_000729117.1">
    <property type="nucleotide sequence ID" value="NC_011601.1"/>
</dbReference>
<dbReference type="SMR" id="B7UPW3"/>
<dbReference type="GeneID" id="93777681"/>
<dbReference type="KEGG" id="ecg:E2348C_4469"/>
<dbReference type="HOGENOM" id="CLU_016503_3_0_6"/>
<dbReference type="Proteomes" id="UP000008205">
    <property type="component" value="Chromosome"/>
</dbReference>
<dbReference type="GO" id="GO:0005737">
    <property type="term" value="C:cytoplasm"/>
    <property type="evidence" value="ECO:0007669"/>
    <property type="project" value="UniProtKB-SubCell"/>
</dbReference>
<dbReference type="GO" id="GO:0005524">
    <property type="term" value="F:ATP binding"/>
    <property type="evidence" value="ECO:0007669"/>
    <property type="project" value="UniProtKB-UniRule"/>
</dbReference>
<dbReference type="GO" id="GO:0140662">
    <property type="term" value="F:ATP-dependent protein folding chaperone"/>
    <property type="evidence" value="ECO:0007669"/>
    <property type="project" value="InterPro"/>
</dbReference>
<dbReference type="GO" id="GO:0016853">
    <property type="term" value="F:isomerase activity"/>
    <property type="evidence" value="ECO:0007669"/>
    <property type="project" value="UniProtKB-KW"/>
</dbReference>
<dbReference type="GO" id="GO:0051082">
    <property type="term" value="F:unfolded protein binding"/>
    <property type="evidence" value="ECO:0007669"/>
    <property type="project" value="UniProtKB-UniRule"/>
</dbReference>
<dbReference type="GO" id="GO:0042026">
    <property type="term" value="P:protein refolding"/>
    <property type="evidence" value="ECO:0007669"/>
    <property type="project" value="UniProtKB-UniRule"/>
</dbReference>
<dbReference type="CDD" id="cd03344">
    <property type="entry name" value="GroEL"/>
    <property type="match status" value="1"/>
</dbReference>
<dbReference type="FunFam" id="1.10.560.10:FF:000001">
    <property type="entry name" value="60 kDa chaperonin"/>
    <property type="match status" value="1"/>
</dbReference>
<dbReference type="FunFam" id="3.50.7.10:FF:000001">
    <property type="entry name" value="60 kDa chaperonin"/>
    <property type="match status" value="1"/>
</dbReference>
<dbReference type="Gene3D" id="3.50.7.10">
    <property type="entry name" value="GroEL"/>
    <property type="match status" value="1"/>
</dbReference>
<dbReference type="Gene3D" id="1.10.560.10">
    <property type="entry name" value="GroEL-like equatorial domain"/>
    <property type="match status" value="1"/>
</dbReference>
<dbReference type="Gene3D" id="3.30.260.10">
    <property type="entry name" value="TCP-1-like chaperonin intermediate domain"/>
    <property type="match status" value="1"/>
</dbReference>
<dbReference type="HAMAP" id="MF_00600">
    <property type="entry name" value="CH60"/>
    <property type="match status" value="1"/>
</dbReference>
<dbReference type="InterPro" id="IPR018370">
    <property type="entry name" value="Chaperonin_Cpn60_CS"/>
</dbReference>
<dbReference type="InterPro" id="IPR001844">
    <property type="entry name" value="Cpn60/GroEL"/>
</dbReference>
<dbReference type="InterPro" id="IPR002423">
    <property type="entry name" value="Cpn60/GroEL/TCP-1"/>
</dbReference>
<dbReference type="InterPro" id="IPR027409">
    <property type="entry name" value="GroEL-like_apical_dom_sf"/>
</dbReference>
<dbReference type="InterPro" id="IPR027413">
    <property type="entry name" value="GROEL-like_equatorial_sf"/>
</dbReference>
<dbReference type="InterPro" id="IPR027410">
    <property type="entry name" value="TCP-1-like_intermed_sf"/>
</dbReference>
<dbReference type="NCBIfam" id="TIGR02348">
    <property type="entry name" value="GroEL"/>
    <property type="match status" value="1"/>
</dbReference>
<dbReference type="NCBIfam" id="NF000592">
    <property type="entry name" value="PRK00013.1"/>
    <property type="match status" value="1"/>
</dbReference>
<dbReference type="NCBIfam" id="NF009487">
    <property type="entry name" value="PRK12849.1"/>
    <property type="match status" value="1"/>
</dbReference>
<dbReference type="NCBIfam" id="NF009488">
    <property type="entry name" value="PRK12850.1"/>
    <property type="match status" value="1"/>
</dbReference>
<dbReference type="NCBIfam" id="NF009489">
    <property type="entry name" value="PRK12851.1"/>
    <property type="match status" value="1"/>
</dbReference>
<dbReference type="PANTHER" id="PTHR45633">
    <property type="entry name" value="60 KDA HEAT SHOCK PROTEIN, MITOCHONDRIAL"/>
    <property type="match status" value="1"/>
</dbReference>
<dbReference type="Pfam" id="PF00118">
    <property type="entry name" value="Cpn60_TCP1"/>
    <property type="match status" value="1"/>
</dbReference>
<dbReference type="PRINTS" id="PR00298">
    <property type="entry name" value="CHAPERONIN60"/>
</dbReference>
<dbReference type="SUPFAM" id="SSF52029">
    <property type="entry name" value="GroEL apical domain-like"/>
    <property type="match status" value="1"/>
</dbReference>
<dbReference type="SUPFAM" id="SSF48592">
    <property type="entry name" value="GroEL equatorial domain-like"/>
    <property type="match status" value="1"/>
</dbReference>
<dbReference type="SUPFAM" id="SSF54849">
    <property type="entry name" value="GroEL-intermediate domain like"/>
    <property type="match status" value="1"/>
</dbReference>
<dbReference type="PROSITE" id="PS00296">
    <property type="entry name" value="CHAPERONINS_CPN60"/>
    <property type="match status" value="1"/>
</dbReference>
<organism>
    <name type="scientific">Escherichia coli O127:H6 (strain E2348/69 / EPEC)</name>
    <dbReference type="NCBI Taxonomy" id="574521"/>
    <lineage>
        <taxon>Bacteria</taxon>
        <taxon>Pseudomonadati</taxon>
        <taxon>Pseudomonadota</taxon>
        <taxon>Gammaproteobacteria</taxon>
        <taxon>Enterobacterales</taxon>
        <taxon>Enterobacteriaceae</taxon>
        <taxon>Escherichia</taxon>
    </lineage>
</organism>
<evidence type="ECO:0000255" key="1">
    <source>
        <dbReference type="HAMAP-Rule" id="MF_00600"/>
    </source>
</evidence>
<reference key="1">
    <citation type="journal article" date="2009" name="J. Bacteriol.">
        <title>Complete genome sequence and comparative genome analysis of enteropathogenic Escherichia coli O127:H6 strain E2348/69.</title>
        <authorList>
            <person name="Iguchi A."/>
            <person name="Thomson N.R."/>
            <person name="Ogura Y."/>
            <person name="Saunders D."/>
            <person name="Ooka T."/>
            <person name="Henderson I.R."/>
            <person name="Harris D."/>
            <person name="Asadulghani M."/>
            <person name="Kurokawa K."/>
            <person name="Dean P."/>
            <person name="Kenny B."/>
            <person name="Quail M.A."/>
            <person name="Thurston S."/>
            <person name="Dougan G."/>
            <person name="Hayashi T."/>
            <person name="Parkhill J."/>
            <person name="Frankel G."/>
        </authorList>
    </citation>
    <scope>NUCLEOTIDE SEQUENCE [LARGE SCALE GENOMIC DNA]</scope>
    <source>
        <strain>E2348/69 / EPEC</strain>
    </source>
</reference>
<protein>
    <recommendedName>
        <fullName evidence="1">Chaperonin GroEL</fullName>
        <ecNumber evidence="1">5.6.1.7</ecNumber>
    </recommendedName>
    <alternativeName>
        <fullName evidence="1">60 kDa chaperonin</fullName>
    </alternativeName>
    <alternativeName>
        <fullName evidence="1">Chaperonin-60</fullName>
        <shortName evidence="1">Cpn60</shortName>
    </alternativeName>
</protein>
<gene>
    <name evidence="1" type="primary">groEL</name>
    <name evidence="1" type="synonym">groL</name>
    <name type="ordered locus">E2348C_4469</name>
</gene>
<proteinExistence type="inferred from homology"/>